<protein>
    <recommendedName>
        <fullName>TLR4 interactor with leucine rich repeats</fullName>
    </recommendedName>
    <alternativeName>
        <fullName>Leucine-rich repeat-containing protein KIAA0644</fullName>
    </alternativeName>
</protein>
<evidence type="ECO:0000250" key="1">
    <source>
        <dbReference type="UniProtKB" id="Q496Z2"/>
    </source>
</evidence>
<evidence type="ECO:0000255" key="2"/>
<evidence type="ECO:0000256" key="3">
    <source>
        <dbReference type="SAM" id="MobiDB-lite"/>
    </source>
</evidence>
<evidence type="ECO:0000269" key="4">
    <source>
    </source>
</evidence>
<evidence type="ECO:0000269" key="5">
    <source>
    </source>
</evidence>
<evidence type="ECO:0000269" key="6">
    <source>
    </source>
</evidence>
<evidence type="ECO:0000269" key="7">
    <source>
    </source>
</evidence>
<evidence type="ECO:0000269" key="8">
    <source ref="5"/>
</evidence>
<evidence type="ECO:0000305" key="9"/>
<sequence>MEAARALRLLLVVCGCLALPPLAEPVCPERCDCQHPQHLLCTNRGLRVVPKTSSLPSPHDVLTYSLGGNFITNITAFDFHRLGQLRRLDLQYNQIRSLHPKTFEKLSRLEELYLGNNLLQALAPGTLAPLRKLRILYANGNEISRLSRGSFEGLESLVKLRLDGNALGALPDAVFAPLGNLLYLHLESNRIRFLGKNAFAQLGKLRFLNLSANELQPSLRHAATFAPLRSLSSLILSANNLQHLGPRIFQHLPRLGLLSLRGNQLTHLAPEAFWGLEALRELRLEGNRLSQLPTALLEPLHSLEALDLSGNELSALHPATFGHLGRLRELSLRNNALSALSGDIFAASPALYRLDLDGNGWTCDCRLRGLKRWMGDWHSQGRLLTVFVQCRHPPALRGKYLDYLDDQQLQNGSCADPSPSASLTADRRRQPLPTAAGEEMTPPAGLAEELPPQPQLQQQGRFLAGVAWDGAARELVGNRSALRLSRRGPGLQQPSPSVAAAAGPAPQSLDLHKKPQRGRPTRADPALAEPTPTASPGSAPSPAGDPWQRATKHRLGTEHQERAAQSDGGAGLPPLVSDPCDFNKFILCNLTVEAVGADSASVRWAVREHRSPRPLGGARFRLLFDRFGQQPKFHRFVYLPESSDSATLRELRGDTPYLVCVEGVLGGRVCPVAPRDHCAGLVTLPEAGSRGGVDYQLLTLALLTVNALLVLLALAAWASRWLRRKLRARRKGGAPVHVRHMYSTRRPLRSMGTGVSADFSGFQSHRPRTTVCALSEADLIEFPCDRFMDSAGGGAGGSLRREDRLLQRFAD</sequence>
<feature type="signal peptide" evidence="2">
    <location>
        <begin position="1"/>
        <end position="25"/>
    </location>
</feature>
<feature type="chain" id="PRO_0000349255" description="TLR4 interactor with leucine rich repeats">
    <location>
        <begin position="26"/>
        <end position="811"/>
    </location>
</feature>
<feature type="topological domain" description="Extracellular" evidence="2">
    <location>
        <begin position="26"/>
        <end position="696"/>
    </location>
</feature>
<feature type="transmembrane region" description="Helical" evidence="2">
    <location>
        <begin position="697"/>
        <end position="717"/>
    </location>
</feature>
<feature type="topological domain" description="Cytoplasmic" evidence="2">
    <location>
        <begin position="718"/>
        <end position="811"/>
    </location>
</feature>
<feature type="domain" description="LRRNT">
    <location>
        <begin position="26"/>
        <end position="57"/>
    </location>
</feature>
<feature type="repeat" description="LRR 1">
    <location>
        <begin position="61"/>
        <end position="81"/>
    </location>
</feature>
<feature type="repeat" description="LRR 2">
    <location>
        <begin position="84"/>
        <end position="105"/>
    </location>
</feature>
<feature type="repeat" description="LRR 3">
    <location>
        <begin position="108"/>
        <end position="129"/>
    </location>
</feature>
<feature type="repeat" description="LRR 4">
    <location>
        <begin position="132"/>
        <end position="153"/>
    </location>
</feature>
<feature type="repeat" description="LRR 5">
    <location>
        <begin position="156"/>
        <end position="177"/>
    </location>
</feature>
<feature type="repeat" description="LRR 6">
    <location>
        <begin position="180"/>
        <end position="201"/>
    </location>
</feature>
<feature type="repeat" description="LRR 7">
    <location>
        <begin position="204"/>
        <end position="223"/>
    </location>
</feature>
<feature type="repeat" description="LRR 8">
    <location>
        <begin position="230"/>
        <end position="251"/>
    </location>
</feature>
<feature type="repeat" description="LRR 9">
    <location>
        <begin position="254"/>
        <end position="275"/>
    </location>
</feature>
<feature type="repeat" description="LRR 10">
    <location>
        <begin position="278"/>
        <end position="299"/>
    </location>
</feature>
<feature type="repeat" description="LRR 11">
    <location>
        <begin position="302"/>
        <end position="323"/>
    </location>
</feature>
<feature type="repeat" description="LRR 12">
    <location>
        <begin position="326"/>
        <end position="347"/>
    </location>
</feature>
<feature type="domain" description="LRRCT">
    <location>
        <begin position="359"/>
        <end position="416"/>
    </location>
</feature>
<feature type="region of interest" description="Disordered" evidence="3">
    <location>
        <begin position="484"/>
        <end position="549"/>
    </location>
</feature>
<feature type="compositionally biased region" description="Low complexity" evidence="3">
    <location>
        <begin position="492"/>
        <end position="508"/>
    </location>
</feature>
<feature type="compositionally biased region" description="Low complexity" evidence="3">
    <location>
        <begin position="530"/>
        <end position="544"/>
    </location>
</feature>
<feature type="modified residue" description="Phosphoserine" evidence="1">
    <location>
        <position position="798"/>
    </location>
</feature>
<feature type="glycosylation site" description="N-linked (GlcNAc...) asparagine" evidence="2">
    <location>
        <position position="73"/>
    </location>
</feature>
<feature type="glycosylation site" description="N-linked (GlcNAc...) asparagine" evidence="2">
    <location>
        <position position="209"/>
    </location>
</feature>
<feature type="glycosylation site" description="N-linked (GlcNAc...) asparagine" evidence="2">
    <location>
        <position position="589"/>
    </location>
</feature>
<feature type="sequence variant" id="VAR_046307" description="In dbSNP:rs740250." evidence="4 7 8">
    <original>N</original>
    <variation>S</variation>
    <location>
        <position position="240"/>
    </location>
</feature>
<feature type="sequence variant" id="VAR_046308" description="In dbSNP:rs3735561.">
    <original>A</original>
    <variation>T</variation>
    <location>
        <position position="347"/>
    </location>
</feature>
<feature type="sequence variant" id="VAR_046309" description="In dbSNP:rs3735562.">
    <original>G</original>
    <variation>D</variation>
    <location>
        <position position="369"/>
    </location>
</feature>
<feature type="sequence variant" id="VAR_075695" description="In dbSNP:rs1783395633." evidence="6">
    <original>G</original>
    <variation>R</variation>
    <location>
        <position position="666"/>
    </location>
</feature>
<gene>
    <name type="primary">TRIL</name>
    <name type="synonym">KIAA0644</name>
</gene>
<comment type="function">
    <text evidence="5">Component of the TLR4 signaling complex. Mediates the innate immune response to bacterial lipopolysaccharide (LPS) leading to cytokine secretion.</text>
</comment>
<comment type="subunit">
    <text evidence="5">Belongs to the lipopolysaccharide (LPS) receptor, a multi-protein complex containing at least CD14, MD-2 and TLR4. Interacts with TLR4; this interaction is greatly enhanced by LPS stimulation. Interacts with LPS.</text>
</comment>
<comment type="interaction">
    <interactant intactId="EBI-6289575">
        <id>Q7L0X0</id>
    </interactant>
    <interactant intactId="EBI-6269719">
        <id>Q13015</id>
        <label>MLLT11</label>
    </interactant>
    <organismsDiffer>false</organismsDiffer>
    <experiments>2</experiments>
</comment>
<comment type="subcellular location">
    <subcellularLocation>
        <location evidence="9">Membrane</location>
        <topology evidence="9">Single-pass type I membrane protein</topology>
    </subcellularLocation>
</comment>
<comment type="tissue specificity">
    <text evidence="5">Highly expressed in the brain, ovary, small intestine and spleen.</text>
</comment>
<comment type="induction">
    <text evidence="5">By bacterial lipopolysaccharides (LPS).</text>
</comment>
<comment type="PTM">
    <text>N-glycolysaled.</text>
</comment>
<comment type="sequence caution" evidence="9">
    <conflict type="erroneous initiation">
        <sequence resource="EMBL-CDS" id="BAA31619"/>
    </conflict>
    <text>Extended N-terminus.</text>
</comment>
<comment type="sequence caution" evidence="9">
    <conflict type="erroneous gene model prediction">
        <sequence resource="EMBL-CDS" id="EAL24209"/>
    </conflict>
</comment>
<accession>Q7L0X0</accession>
<accession>A4D1A6</accession>
<accession>O75139</accession>
<reference key="1">
    <citation type="journal article" date="1998" name="DNA Res.">
        <title>Prediction of the coding sequences of unidentified human genes. X. The complete sequences of 100 new cDNA clones from brain which can code for large proteins in vitro.</title>
        <authorList>
            <person name="Ishikawa K."/>
            <person name="Nagase T."/>
            <person name="Suyama M."/>
            <person name="Miyajima N."/>
            <person name="Tanaka A."/>
            <person name="Kotani H."/>
            <person name="Nomura N."/>
            <person name="Ohara O."/>
        </authorList>
    </citation>
    <scope>NUCLEOTIDE SEQUENCE [LARGE SCALE MRNA]</scope>
    <scope>VARIANT SER-240</scope>
    <source>
        <tissue>Brain</tissue>
    </source>
</reference>
<reference key="2">
    <citation type="submission" date="2005-04" db="EMBL/GenBank/DDBJ databases">
        <authorList>
            <person name="Ohara O."/>
            <person name="Suyama M."/>
            <person name="Nagase T."/>
            <person name="Ishikawa K."/>
        </authorList>
    </citation>
    <scope>SEQUENCE REVISION</scope>
</reference>
<reference key="3">
    <citation type="journal article" date="2003" name="Nature">
        <title>The DNA sequence of human chromosome 7.</title>
        <authorList>
            <person name="Hillier L.W."/>
            <person name="Fulton R.S."/>
            <person name="Fulton L.A."/>
            <person name="Graves T.A."/>
            <person name="Pepin K.H."/>
            <person name="Wagner-McPherson C."/>
            <person name="Layman D."/>
            <person name="Maas J."/>
            <person name="Jaeger S."/>
            <person name="Walker R."/>
            <person name="Wylie K."/>
            <person name="Sekhon M."/>
            <person name="Becker M.C."/>
            <person name="O'Laughlin M.D."/>
            <person name="Schaller M.E."/>
            <person name="Fewell G.A."/>
            <person name="Delehaunty K.D."/>
            <person name="Miner T.L."/>
            <person name="Nash W.E."/>
            <person name="Cordes M."/>
            <person name="Du H."/>
            <person name="Sun H."/>
            <person name="Edwards J."/>
            <person name="Bradshaw-Cordum H."/>
            <person name="Ali J."/>
            <person name="Andrews S."/>
            <person name="Isak A."/>
            <person name="Vanbrunt A."/>
            <person name="Nguyen C."/>
            <person name="Du F."/>
            <person name="Lamar B."/>
            <person name="Courtney L."/>
            <person name="Kalicki J."/>
            <person name="Ozersky P."/>
            <person name="Bielicki L."/>
            <person name="Scott K."/>
            <person name="Holmes A."/>
            <person name="Harkins R."/>
            <person name="Harris A."/>
            <person name="Strong C.M."/>
            <person name="Hou S."/>
            <person name="Tomlinson C."/>
            <person name="Dauphin-Kohlberg S."/>
            <person name="Kozlowicz-Reilly A."/>
            <person name="Leonard S."/>
            <person name="Rohlfing T."/>
            <person name="Rock S.M."/>
            <person name="Tin-Wollam A.-M."/>
            <person name="Abbott A."/>
            <person name="Minx P."/>
            <person name="Maupin R."/>
            <person name="Strowmatt C."/>
            <person name="Latreille P."/>
            <person name="Miller N."/>
            <person name="Johnson D."/>
            <person name="Murray J."/>
            <person name="Woessner J.P."/>
            <person name="Wendl M.C."/>
            <person name="Yang S.-P."/>
            <person name="Schultz B.R."/>
            <person name="Wallis J.W."/>
            <person name="Spieth J."/>
            <person name="Bieri T.A."/>
            <person name="Nelson J.O."/>
            <person name="Berkowicz N."/>
            <person name="Wohldmann P.E."/>
            <person name="Cook L.L."/>
            <person name="Hickenbotham M.T."/>
            <person name="Eldred J."/>
            <person name="Williams D."/>
            <person name="Bedell J.A."/>
            <person name="Mardis E.R."/>
            <person name="Clifton S.W."/>
            <person name="Chissoe S.L."/>
            <person name="Marra M.A."/>
            <person name="Raymond C."/>
            <person name="Haugen E."/>
            <person name="Gillett W."/>
            <person name="Zhou Y."/>
            <person name="James R."/>
            <person name="Phelps K."/>
            <person name="Iadanoto S."/>
            <person name="Bubb K."/>
            <person name="Simms E."/>
            <person name="Levy R."/>
            <person name="Clendenning J."/>
            <person name="Kaul R."/>
            <person name="Kent W.J."/>
            <person name="Furey T.S."/>
            <person name="Baertsch R.A."/>
            <person name="Brent M.R."/>
            <person name="Keibler E."/>
            <person name="Flicek P."/>
            <person name="Bork P."/>
            <person name="Suyama M."/>
            <person name="Bailey J.A."/>
            <person name="Portnoy M.E."/>
            <person name="Torrents D."/>
            <person name="Chinwalla A.T."/>
            <person name="Gish W.R."/>
            <person name="Eddy S.R."/>
            <person name="McPherson J.D."/>
            <person name="Olson M.V."/>
            <person name="Eichler E.E."/>
            <person name="Green E.D."/>
            <person name="Waterston R.H."/>
            <person name="Wilson R.K."/>
        </authorList>
    </citation>
    <scope>NUCLEOTIDE SEQUENCE [LARGE SCALE GENOMIC DNA]</scope>
</reference>
<reference key="4">
    <citation type="journal article" date="2003" name="Science">
        <title>Human chromosome 7: DNA sequence and biology.</title>
        <authorList>
            <person name="Scherer S.W."/>
            <person name="Cheung J."/>
            <person name="MacDonald J.R."/>
            <person name="Osborne L.R."/>
            <person name="Nakabayashi K."/>
            <person name="Herbrick J.-A."/>
            <person name="Carson A.R."/>
            <person name="Parker-Katiraee L."/>
            <person name="Skaug J."/>
            <person name="Khaja R."/>
            <person name="Zhang J."/>
            <person name="Hudek A.K."/>
            <person name="Li M."/>
            <person name="Haddad M."/>
            <person name="Duggan G.E."/>
            <person name="Fernandez B.A."/>
            <person name="Kanematsu E."/>
            <person name="Gentles S."/>
            <person name="Christopoulos C.C."/>
            <person name="Choufani S."/>
            <person name="Kwasnicka D."/>
            <person name="Zheng X.H."/>
            <person name="Lai Z."/>
            <person name="Nusskern D.R."/>
            <person name="Zhang Q."/>
            <person name="Gu Z."/>
            <person name="Lu F."/>
            <person name="Zeesman S."/>
            <person name="Nowaczyk M.J."/>
            <person name="Teshima I."/>
            <person name="Chitayat D."/>
            <person name="Shuman C."/>
            <person name="Weksberg R."/>
            <person name="Zackai E.H."/>
            <person name="Grebe T.A."/>
            <person name="Cox S.R."/>
            <person name="Kirkpatrick S.J."/>
            <person name="Rahman N."/>
            <person name="Friedman J.M."/>
            <person name="Heng H.H.Q."/>
            <person name="Pelicci P.G."/>
            <person name="Lo-Coco F."/>
            <person name="Belloni E."/>
            <person name="Shaffer L.G."/>
            <person name="Pober B."/>
            <person name="Morton C.C."/>
            <person name="Gusella J.F."/>
            <person name="Bruns G.A.P."/>
            <person name="Korf B.R."/>
            <person name="Quade B.J."/>
            <person name="Ligon A.H."/>
            <person name="Ferguson H."/>
            <person name="Higgins A.W."/>
            <person name="Leach N.T."/>
            <person name="Herrick S.R."/>
            <person name="Lemyre E."/>
            <person name="Farra C.G."/>
            <person name="Kim H.-G."/>
            <person name="Summers A.M."/>
            <person name="Gripp K.W."/>
            <person name="Roberts W."/>
            <person name="Szatmari P."/>
            <person name="Winsor E.J.T."/>
            <person name="Grzeschik K.-H."/>
            <person name="Teebi A."/>
            <person name="Minassian B.A."/>
            <person name="Kere J."/>
            <person name="Armengol L."/>
            <person name="Pujana M.A."/>
            <person name="Estivill X."/>
            <person name="Wilson M.D."/>
            <person name="Koop B.F."/>
            <person name="Tosi S."/>
            <person name="Moore G.E."/>
            <person name="Boright A.P."/>
            <person name="Zlotorynski E."/>
            <person name="Kerem B."/>
            <person name="Kroisel P.M."/>
            <person name="Petek E."/>
            <person name="Oscier D.G."/>
            <person name="Mould S.J."/>
            <person name="Doehner H."/>
            <person name="Doehner K."/>
            <person name="Rommens J.M."/>
            <person name="Vincent J.B."/>
            <person name="Venter J.C."/>
            <person name="Li P.W."/>
            <person name="Mural R.J."/>
            <person name="Adams M.D."/>
            <person name="Tsui L.-C."/>
        </authorList>
    </citation>
    <scope>NUCLEOTIDE SEQUENCE [LARGE SCALE GENOMIC DNA]</scope>
</reference>
<reference key="5">
    <citation type="submission" date="2005-07" db="EMBL/GenBank/DDBJ databases">
        <authorList>
            <person name="Mural R.J."/>
            <person name="Istrail S."/>
            <person name="Sutton G.G."/>
            <person name="Florea L."/>
            <person name="Halpern A.L."/>
            <person name="Mobarry C.M."/>
            <person name="Lippert R."/>
            <person name="Walenz B."/>
            <person name="Shatkay H."/>
            <person name="Dew I."/>
            <person name="Miller J.R."/>
            <person name="Flanigan M.J."/>
            <person name="Edwards N.J."/>
            <person name="Bolanos R."/>
            <person name="Fasulo D."/>
            <person name="Halldorsson B.V."/>
            <person name="Hannenhalli S."/>
            <person name="Turner R."/>
            <person name="Yooseph S."/>
            <person name="Lu F."/>
            <person name="Nusskern D.R."/>
            <person name="Shue B.C."/>
            <person name="Zheng X.H."/>
            <person name="Zhong F."/>
            <person name="Delcher A.L."/>
            <person name="Huson D.H."/>
            <person name="Kravitz S.A."/>
            <person name="Mouchard L."/>
            <person name="Reinert K."/>
            <person name="Remington K.A."/>
            <person name="Clark A.G."/>
            <person name="Waterman M.S."/>
            <person name="Eichler E.E."/>
            <person name="Adams M.D."/>
            <person name="Hunkapiller M.W."/>
            <person name="Myers E.W."/>
            <person name="Venter J.C."/>
        </authorList>
    </citation>
    <scope>NUCLEOTIDE SEQUENCE [LARGE SCALE GENOMIC DNA]</scope>
    <scope>VARIANT SER-240</scope>
</reference>
<reference key="6">
    <citation type="journal article" date="2004" name="Genome Res.">
        <title>The status, quality, and expansion of the NIH full-length cDNA project: the Mammalian Gene Collection (MGC).</title>
        <authorList>
            <consortium name="The MGC Project Team"/>
        </authorList>
    </citation>
    <scope>NUCLEOTIDE SEQUENCE [LARGE SCALE MRNA]</scope>
    <scope>VARIANT SER-240</scope>
    <source>
        <tissue>Brain</tissue>
    </source>
</reference>
<reference key="7">
    <citation type="journal article" date="2009" name="J. Immunol.">
        <title>TRIL, a functional component of the TLR4 signaling complex, highly expressed in brain.</title>
        <authorList>
            <person name="Carpenter S."/>
            <person name="Carlson T."/>
            <person name="Dellacasagrande J."/>
            <person name="Garcia A."/>
            <person name="Gibbons S."/>
            <person name="Hertzog P."/>
            <person name="Lyons A."/>
            <person name="Lin L.L."/>
            <person name="Lynch M."/>
            <person name="Monie T."/>
            <person name="Murphy C."/>
            <person name="Seidl K.J."/>
            <person name="Wells C."/>
            <person name="Dunne A."/>
            <person name="O'Neill L.A."/>
        </authorList>
    </citation>
    <scope>FUNCTION</scope>
    <scope>TISSUE SPECIFICITY</scope>
    <scope>INDUCTION BY LPS IN COMPLEX WITH TLR4</scope>
    <scope>INTERACTION WITH LPS</scope>
    <scope>GLYCOSYLATION</scope>
</reference>
<reference key="8">
    <citation type="journal article" date="2015" name="Am. J. Hum. Genet.">
        <title>Joubert Syndrome in French Canadians and Identification of Mutations in CEP104.</title>
        <authorList>
            <consortium name="Care4Rare Canada Consortium"/>
            <person name="Srour M."/>
            <person name="Hamdan F.F."/>
            <person name="McKnight D."/>
            <person name="Davis E."/>
            <person name="Mandel H."/>
            <person name="Schwartzentruber J."/>
            <person name="Martin B."/>
            <person name="Patry L."/>
            <person name="Nassif C."/>
            <person name="Dionne-Laporte A."/>
            <person name="Ospina L.H."/>
            <person name="Lemyre E."/>
            <person name="Massicotte C."/>
            <person name="Laframboise R."/>
            <person name="Maranda B."/>
            <person name="Labuda D."/>
            <person name="Decarie J.C."/>
            <person name="Rypens F."/>
            <person name="Goldsher D."/>
            <person name="Fallet-Bianco C."/>
            <person name="Soucy J.F."/>
            <person name="Laberge A.M."/>
            <person name="Maftei C."/>
            <person name="Boycott K."/>
            <person name="Brais B."/>
            <person name="Boucher R.M."/>
            <person name="Rouleau G.A."/>
            <person name="Katsanis N."/>
            <person name="Majewski J."/>
            <person name="Elpeleg O."/>
            <person name="Kukolich M.K."/>
            <person name="Shalev S."/>
            <person name="Michaud J.L."/>
        </authorList>
    </citation>
    <scope>VARIANT ARG-666</scope>
</reference>
<keyword id="KW-0325">Glycoprotein</keyword>
<keyword id="KW-0391">Immunity</keyword>
<keyword id="KW-0395">Inflammatory response</keyword>
<keyword id="KW-0399">Innate immunity</keyword>
<keyword id="KW-0433">Leucine-rich repeat</keyword>
<keyword id="KW-0472">Membrane</keyword>
<keyword id="KW-0597">Phosphoprotein</keyword>
<keyword id="KW-1267">Proteomics identification</keyword>
<keyword id="KW-1185">Reference proteome</keyword>
<keyword id="KW-0677">Repeat</keyword>
<keyword id="KW-0732">Signal</keyword>
<keyword id="KW-0812">Transmembrane</keyword>
<keyword id="KW-1133">Transmembrane helix</keyword>
<dbReference type="EMBL" id="AB014544">
    <property type="protein sequence ID" value="BAA31619.2"/>
    <property type="status" value="ALT_INIT"/>
    <property type="molecule type" value="mRNA"/>
</dbReference>
<dbReference type="EMBL" id="AC005013">
    <property type="status" value="NOT_ANNOTATED_CDS"/>
    <property type="molecule type" value="Genomic_DNA"/>
</dbReference>
<dbReference type="EMBL" id="CH236948">
    <property type="protein sequence ID" value="EAL24208.1"/>
    <property type="molecule type" value="Genomic_DNA"/>
</dbReference>
<dbReference type="EMBL" id="CH236948">
    <property type="protein sequence ID" value="EAL24209.1"/>
    <property type="status" value="ALT_SEQ"/>
    <property type="molecule type" value="Genomic_DNA"/>
</dbReference>
<dbReference type="EMBL" id="CH471073">
    <property type="protein sequence ID" value="EAW93913.1"/>
    <property type="molecule type" value="Genomic_DNA"/>
</dbReference>
<dbReference type="EMBL" id="BC036337">
    <property type="protein sequence ID" value="AAH36337.1"/>
    <property type="molecule type" value="mRNA"/>
</dbReference>
<dbReference type="CCDS" id="CCDS75573.1"/>
<dbReference type="RefSeq" id="NP_055632.2">
    <property type="nucleotide sequence ID" value="NM_014817.3"/>
</dbReference>
<dbReference type="SMR" id="Q7L0X0"/>
<dbReference type="BioGRID" id="115198">
    <property type="interactions" value="1"/>
</dbReference>
<dbReference type="FunCoup" id="Q7L0X0">
    <property type="interactions" value="35"/>
</dbReference>
<dbReference type="IntAct" id="Q7L0X0">
    <property type="interactions" value="2"/>
</dbReference>
<dbReference type="STRING" id="9606.ENSP00000479256"/>
<dbReference type="GlyCosmos" id="Q7L0X0">
    <property type="glycosylation" value="8 sites, 2 glycans"/>
</dbReference>
<dbReference type="GlyGen" id="Q7L0X0">
    <property type="glycosylation" value="9 sites, 2 N-linked glycans (1 site), 3 O-linked glycans (6 sites)"/>
</dbReference>
<dbReference type="iPTMnet" id="Q7L0X0"/>
<dbReference type="PhosphoSitePlus" id="Q7L0X0"/>
<dbReference type="BioMuta" id="TRIL"/>
<dbReference type="DMDM" id="311033514"/>
<dbReference type="jPOST" id="Q7L0X0"/>
<dbReference type="MassIVE" id="Q7L0X0"/>
<dbReference type="PaxDb" id="9606-ENSP00000479256"/>
<dbReference type="PeptideAtlas" id="Q7L0X0"/>
<dbReference type="ProteomicsDB" id="68737"/>
<dbReference type="Antibodypedia" id="73340">
    <property type="antibodies" value="25 antibodies from 9 providers"/>
</dbReference>
<dbReference type="DNASU" id="9865"/>
<dbReference type="Ensembl" id="ENST00000539664.3">
    <property type="protein sequence ID" value="ENSP00000479256.1"/>
    <property type="gene ID" value="ENSG00000255690.3"/>
</dbReference>
<dbReference type="GeneID" id="9865"/>
<dbReference type="KEGG" id="hsa:9865"/>
<dbReference type="MANE-Select" id="ENST00000539664.3">
    <property type="protein sequence ID" value="ENSP00000479256.1"/>
    <property type="RefSeq nucleotide sequence ID" value="NM_014817.4"/>
    <property type="RefSeq protein sequence ID" value="NP_055632.2"/>
</dbReference>
<dbReference type="UCSC" id="uc032zip.2">
    <property type="organism name" value="human"/>
</dbReference>
<dbReference type="AGR" id="HGNC:22200"/>
<dbReference type="CTD" id="9865"/>
<dbReference type="DisGeNET" id="9865"/>
<dbReference type="GeneCards" id="TRIL"/>
<dbReference type="HGNC" id="HGNC:22200">
    <property type="gene designation" value="TRIL"/>
</dbReference>
<dbReference type="HPA" id="ENSG00000255690">
    <property type="expression patterns" value="Tissue enriched (brain)"/>
</dbReference>
<dbReference type="MIM" id="613356">
    <property type="type" value="gene"/>
</dbReference>
<dbReference type="neXtProt" id="NX_Q7L0X0"/>
<dbReference type="OpenTargets" id="ENSG00000255690"/>
<dbReference type="VEuPathDB" id="HostDB:ENSG00000255690"/>
<dbReference type="eggNOG" id="KOG0619">
    <property type="taxonomic scope" value="Eukaryota"/>
</dbReference>
<dbReference type="GeneTree" id="ENSGT00940000161975"/>
<dbReference type="HOGENOM" id="CLU_357128_0_0_1"/>
<dbReference type="InParanoid" id="Q7L0X0"/>
<dbReference type="OMA" id="TDPCDFN"/>
<dbReference type="OrthoDB" id="694479at2759"/>
<dbReference type="PAN-GO" id="Q7L0X0">
    <property type="GO annotations" value="6 GO annotations based on evolutionary models"/>
</dbReference>
<dbReference type="PhylomeDB" id="Q7L0X0"/>
<dbReference type="PathwayCommons" id="Q7L0X0"/>
<dbReference type="SignaLink" id="Q7L0X0"/>
<dbReference type="BioGRID-ORCS" id="9865">
    <property type="hits" value="7 hits in 251 CRISPR screens"/>
</dbReference>
<dbReference type="ChiTaRS" id="TRIL">
    <property type="organism name" value="human"/>
</dbReference>
<dbReference type="GeneWiki" id="KIAA0644"/>
<dbReference type="GenomeRNAi" id="9865"/>
<dbReference type="Pharos" id="Q7L0X0">
    <property type="development level" value="Tbio"/>
</dbReference>
<dbReference type="PRO" id="PR:Q7L0X0"/>
<dbReference type="Proteomes" id="UP000005640">
    <property type="component" value="Chromosome 7"/>
</dbReference>
<dbReference type="RNAct" id="Q7L0X0">
    <property type="molecule type" value="protein"/>
</dbReference>
<dbReference type="Bgee" id="ENSG00000255690">
    <property type="expression patterns" value="Expressed in medial globus pallidus and 161 other cell types or tissues"/>
</dbReference>
<dbReference type="GO" id="GO:0031012">
    <property type="term" value="C:extracellular matrix"/>
    <property type="evidence" value="ECO:0000318"/>
    <property type="project" value="GO_Central"/>
</dbReference>
<dbReference type="GO" id="GO:0005615">
    <property type="term" value="C:extracellular space"/>
    <property type="evidence" value="ECO:0000318"/>
    <property type="project" value="GO_Central"/>
</dbReference>
<dbReference type="GO" id="GO:0046696">
    <property type="term" value="C:lipopolysaccharide receptor complex"/>
    <property type="evidence" value="ECO:0000314"/>
    <property type="project" value="UniProtKB"/>
</dbReference>
<dbReference type="GO" id="GO:0001530">
    <property type="term" value="F:lipopolysaccharide binding"/>
    <property type="evidence" value="ECO:0000314"/>
    <property type="project" value="UniProtKB"/>
</dbReference>
<dbReference type="GO" id="GO:0006954">
    <property type="term" value="P:inflammatory response"/>
    <property type="evidence" value="ECO:0007669"/>
    <property type="project" value="UniProtKB-KW"/>
</dbReference>
<dbReference type="GO" id="GO:0045087">
    <property type="term" value="P:innate immune response"/>
    <property type="evidence" value="ECO:0007669"/>
    <property type="project" value="UniProtKB-KW"/>
</dbReference>
<dbReference type="GO" id="GO:0002718">
    <property type="term" value="P:regulation of cytokine production involved in immune response"/>
    <property type="evidence" value="ECO:0000314"/>
    <property type="project" value="UniProtKB"/>
</dbReference>
<dbReference type="GO" id="GO:0034142">
    <property type="term" value="P:toll-like receptor 4 signaling pathway"/>
    <property type="evidence" value="ECO:0000314"/>
    <property type="project" value="UniProtKB"/>
</dbReference>
<dbReference type="CDD" id="cd00063">
    <property type="entry name" value="FN3"/>
    <property type="match status" value="1"/>
</dbReference>
<dbReference type="FunFam" id="3.80.10.10:FF:000169">
    <property type="entry name" value="TLR4 interactor with leucine rich repeats"/>
    <property type="match status" value="1"/>
</dbReference>
<dbReference type="FunFam" id="3.80.10.10:FF:000247">
    <property type="entry name" value="TLR4 interactor with leucine rich repeats"/>
    <property type="match status" value="1"/>
</dbReference>
<dbReference type="Gene3D" id="3.80.10.10">
    <property type="entry name" value="Ribonuclease Inhibitor"/>
    <property type="match status" value="2"/>
</dbReference>
<dbReference type="InterPro" id="IPR000483">
    <property type="entry name" value="Cys-rich_flank_reg_C"/>
</dbReference>
<dbReference type="InterPro" id="IPR050328">
    <property type="entry name" value="Dev_Immune_Receptor"/>
</dbReference>
<dbReference type="InterPro" id="IPR003961">
    <property type="entry name" value="FN3_dom"/>
</dbReference>
<dbReference type="InterPro" id="IPR001611">
    <property type="entry name" value="Leu-rich_rpt"/>
</dbReference>
<dbReference type="InterPro" id="IPR003591">
    <property type="entry name" value="Leu-rich_rpt_typical-subtyp"/>
</dbReference>
<dbReference type="InterPro" id="IPR032675">
    <property type="entry name" value="LRR_dom_sf"/>
</dbReference>
<dbReference type="PANTHER" id="PTHR24373">
    <property type="entry name" value="SLIT RELATED LEUCINE-RICH REPEAT NEURONAL PROTEIN"/>
    <property type="match status" value="1"/>
</dbReference>
<dbReference type="PANTHER" id="PTHR24373:SF307">
    <property type="entry name" value="TLR4 INTERACTOR WITH LEUCINE RICH REPEATS"/>
    <property type="match status" value="1"/>
</dbReference>
<dbReference type="Pfam" id="PF13855">
    <property type="entry name" value="LRR_8"/>
    <property type="match status" value="4"/>
</dbReference>
<dbReference type="SMART" id="SM00369">
    <property type="entry name" value="LRR_TYP"/>
    <property type="match status" value="11"/>
</dbReference>
<dbReference type="SMART" id="SM00082">
    <property type="entry name" value="LRRCT"/>
    <property type="match status" value="1"/>
</dbReference>
<dbReference type="SUPFAM" id="SSF52058">
    <property type="entry name" value="L domain-like"/>
    <property type="match status" value="1"/>
</dbReference>
<dbReference type="PROSITE" id="PS51450">
    <property type="entry name" value="LRR"/>
    <property type="match status" value="13"/>
</dbReference>
<proteinExistence type="evidence at protein level"/>
<name>TRIL_HUMAN</name>
<organism>
    <name type="scientific">Homo sapiens</name>
    <name type="common">Human</name>
    <dbReference type="NCBI Taxonomy" id="9606"/>
    <lineage>
        <taxon>Eukaryota</taxon>
        <taxon>Metazoa</taxon>
        <taxon>Chordata</taxon>
        <taxon>Craniata</taxon>
        <taxon>Vertebrata</taxon>
        <taxon>Euteleostomi</taxon>
        <taxon>Mammalia</taxon>
        <taxon>Eutheria</taxon>
        <taxon>Euarchontoglires</taxon>
        <taxon>Primates</taxon>
        <taxon>Haplorrhini</taxon>
        <taxon>Catarrhini</taxon>
        <taxon>Hominidae</taxon>
        <taxon>Homo</taxon>
    </lineage>
</organism>